<sequence length="501" mass="57299">MSDQQLDQHELQQEENKLIAQRKEKLAAVREARAIAFPNDFRRDAYFADLQKQYADKTKEELEAAAIPVKVAGRIMLNRGSFIVLQDSSERLQVYVNRKTLPEETLAEIKTWDLGDIIGAEGVLARSGKGDLYVDMTSVRLLTKSLRPLPDKHHGLTDTEQRYRQRYVDLMVNEETRHTFRVRSQVIAHIRRFLSERGFLEVETPMLQTIPGGAAAKPFETHHNALDMAMFLRIAPELYLKRLVVGGFEKVFEINRNFRNEGVSTRHNPEFTMLEFYQAYADYEDNMDLTEELFRELAQAVLGTTDVPYGDKVFHFGEPFVRLSVFDSILKYNPEISAADLNDVEKARAIAKKAGAKVLGHEGLGKLQVMIFEELVEHKLEQPHFITRYPFEVSPLARRNDEDPSVTDRFELFIGGREIANAYSELNDAEDQAERFMLQVKEKDAGDDEAMHYDADFINALEYGMPPTAGEGIGIDRLVMLLTNSPSIRDVILFPHMRPQA</sequence>
<comment type="catalytic activity">
    <reaction evidence="1">
        <text>tRNA(Lys) + L-lysine + ATP = L-lysyl-tRNA(Lys) + AMP + diphosphate</text>
        <dbReference type="Rhea" id="RHEA:20792"/>
        <dbReference type="Rhea" id="RHEA-COMP:9696"/>
        <dbReference type="Rhea" id="RHEA-COMP:9697"/>
        <dbReference type="ChEBI" id="CHEBI:30616"/>
        <dbReference type="ChEBI" id="CHEBI:32551"/>
        <dbReference type="ChEBI" id="CHEBI:33019"/>
        <dbReference type="ChEBI" id="CHEBI:78442"/>
        <dbReference type="ChEBI" id="CHEBI:78529"/>
        <dbReference type="ChEBI" id="CHEBI:456215"/>
        <dbReference type="EC" id="6.1.1.6"/>
    </reaction>
</comment>
<comment type="cofactor">
    <cofactor evidence="1">
        <name>Mg(2+)</name>
        <dbReference type="ChEBI" id="CHEBI:18420"/>
    </cofactor>
    <text evidence="1">Binds 3 Mg(2+) ions per subunit.</text>
</comment>
<comment type="subunit">
    <text evidence="1">Homodimer.</text>
</comment>
<comment type="subcellular location">
    <subcellularLocation>
        <location evidence="1">Cytoplasm</location>
    </subcellularLocation>
</comment>
<comment type="similarity">
    <text evidence="1">Belongs to the class-II aminoacyl-tRNA synthetase family.</text>
</comment>
<feature type="chain" id="PRO_1000012908" description="Lysine--tRNA ligase">
    <location>
        <begin position="1"/>
        <end position="501"/>
    </location>
</feature>
<feature type="binding site" evidence="1">
    <location>
        <position position="411"/>
    </location>
    <ligand>
        <name>Mg(2+)</name>
        <dbReference type="ChEBI" id="CHEBI:18420"/>
        <label>1</label>
    </ligand>
</feature>
<feature type="binding site" evidence="1">
    <location>
        <position position="418"/>
    </location>
    <ligand>
        <name>Mg(2+)</name>
        <dbReference type="ChEBI" id="CHEBI:18420"/>
        <label>1</label>
    </ligand>
</feature>
<feature type="binding site" evidence="1">
    <location>
        <position position="418"/>
    </location>
    <ligand>
        <name>Mg(2+)</name>
        <dbReference type="ChEBI" id="CHEBI:18420"/>
        <label>2</label>
    </ligand>
</feature>
<organism>
    <name type="scientific">Pseudomonas aeruginosa (strain UCBPP-PA14)</name>
    <dbReference type="NCBI Taxonomy" id="208963"/>
    <lineage>
        <taxon>Bacteria</taxon>
        <taxon>Pseudomonadati</taxon>
        <taxon>Pseudomonadota</taxon>
        <taxon>Gammaproteobacteria</taxon>
        <taxon>Pseudomonadales</taxon>
        <taxon>Pseudomonadaceae</taxon>
        <taxon>Pseudomonas</taxon>
    </lineage>
</organism>
<accession>Q02RH2</accession>
<gene>
    <name evidence="1" type="primary">lysS</name>
    <name type="ordered locus">PA14_16530</name>
</gene>
<evidence type="ECO:0000255" key="1">
    <source>
        <dbReference type="HAMAP-Rule" id="MF_00252"/>
    </source>
</evidence>
<reference key="1">
    <citation type="journal article" date="2006" name="Genome Biol.">
        <title>Genomic analysis reveals that Pseudomonas aeruginosa virulence is combinatorial.</title>
        <authorList>
            <person name="Lee D.G."/>
            <person name="Urbach J.M."/>
            <person name="Wu G."/>
            <person name="Liberati N.T."/>
            <person name="Feinbaum R.L."/>
            <person name="Miyata S."/>
            <person name="Diggins L.T."/>
            <person name="He J."/>
            <person name="Saucier M."/>
            <person name="Deziel E."/>
            <person name="Friedman L."/>
            <person name="Li L."/>
            <person name="Grills G."/>
            <person name="Montgomery K."/>
            <person name="Kucherlapati R."/>
            <person name="Rahme L.G."/>
            <person name="Ausubel F.M."/>
        </authorList>
    </citation>
    <scope>NUCLEOTIDE SEQUENCE [LARGE SCALE GENOMIC DNA]</scope>
    <source>
        <strain>UCBPP-PA14</strain>
    </source>
</reference>
<keyword id="KW-0030">Aminoacyl-tRNA synthetase</keyword>
<keyword id="KW-0067">ATP-binding</keyword>
<keyword id="KW-0963">Cytoplasm</keyword>
<keyword id="KW-0436">Ligase</keyword>
<keyword id="KW-0460">Magnesium</keyword>
<keyword id="KW-0479">Metal-binding</keyword>
<keyword id="KW-0547">Nucleotide-binding</keyword>
<keyword id="KW-0648">Protein biosynthesis</keyword>
<proteinExistence type="inferred from homology"/>
<protein>
    <recommendedName>
        <fullName evidence="1">Lysine--tRNA ligase</fullName>
        <ecNumber evidence="1">6.1.1.6</ecNumber>
    </recommendedName>
    <alternativeName>
        <fullName evidence="1">Lysyl-tRNA synthetase</fullName>
        <shortName evidence="1">LysRS</shortName>
    </alternativeName>
</protein>
<dbReference type="EC" id="6.1.1.6" evidence="1"/>
<dbReference type="EMBL" id="CP000438">
    <property type="protein sequence ID" value="ABJ12933.1"/>
    <property type="molecule type" value="Genomic_DNA"/>
</dbReference>
<dbReference type="RefSeq" id="WP_003092523.1">
    <property type="nucleotide sequence ID" value="NZ_CP034244.1"/>
</dbReference>
<dbReference type="SMR" id="Q02RH2"/>
<dbReference type="KEGG" id="pau:PA14_16530"/>
<dbReference type="PseudoCAP" id="PA14_16530"/>
<dbReference type="HOGENOM" id="CLU_008255_6_0_6"/>
<dbReference type="BioCyc" id="PAER208963:G1G74-1361-MONOMER"/>
<dbReference type="Proteomes" id="UP000000653">
    <property type="component" value="Chromosome"/>
</dbReference>
<dbReference type="GO" id="GO:0005829">
    <property type="term" value="C:cytosol"/>
    <property type="evidence" value="ECO:0007669"/>
    <property type="project" value="TreeGrafter"/>
</dbReference>
<dbReference type="GO" id="GO:0005524">
    <property type="term" value="F:ATP binding"/>
    <property type="evidence" value="ECO:0007669"/>
    <property type="project" value="UniProtKB-UniRule"/>
</dbReference>
<dbReference type="GO" id="GO:0004824">
    <property type="term" value="F:lysine-tRNA ligase activity"/>
    <property type="evidence" value="ECO:0007669"/>
    <property type="project" value="UniProtKB-UniRule"/>
</dbReference>
<dbReference type="GO" id="GO:0000287">
    <property type="term" value="F:magnesium ion binding"/>
    <property type="evidence" value="ECO:0007669"/>
    <property type="project" value="UniProtKB-UniRule"/>
</dbReference>
<dbReference type="GO" id="GO:0000049">
    <property type="term" value="F:tRNA binding"/>
    <property type="evidence" value="ECO:0007669"/>
    <property type="project" value="TreeGrafter"/>
</dbReference>
<dbReference type="GO" id="GO:0006430">
    <property type="term" value="P:lysyl-tRNA aminoacylation"/>
    <property type="evidence" value="ECO:0007669"/>
    <property type="project" value="UniProtKB-UniRule"/>
</dbReference>
<dbReference type="CDD" id="cd00775">
    <property type="entry name" value="LysRS_core"/>
    <property type="match status" value="1"/>
</dbReference>
<dbReference type="CDD" id="cd04322">
    <property type="entry name" value="LysRS_N"/>
    <property type="match status" value="1"/>
</dbReference>
<dbReference type="FunFam" id="2.40.50.140:FF:000024">
    <property type="entry name" value="Lysine--tRNA ligase"/>
    <property type="match status" value="1"/>
</dbReference>
<dbReference type="FunFam" id="3.30.930.10:FF:000001">
    <property type="entry name" value="Lysine--tRNA ligase"/>
    <property type="match status" value="1"/>
</dbReference>
<dbReference type="Gene3D" id="3.30.930.10">
    <property type="entry name" value="Bira Bifunctional Protein, Domain 2"/>
    <property type="match status" value="1"/>
</dbReference>
<dbReference type="Gene3D" id="2.40.50.140">
    <property type="entry name" value="Nucleic acid-binding proteins"/>
    <property type="match status" value="1"/>
</dbReference>
<dbReference type="HAMAP" id="MF_00252">
    <property type="entry name" value="Lys_tRNA_synth_class2"/>
    <property type="match status" value="1"/>
</dbReference>
<dbReference type="InterPro" id="IPR004364">
    <property type="entry name" value="Aa-tRNA-synt_II"/>
</dbReference>
<dbReference type="InterPro" id="IPR006195">
    <property type="entry name" value="aa-tRNA-synth_II"/>
</dbReference>
<dbReference type="InterPro" id="IPR045864">
    <property type="entry name" value="aa-tRNA-synth_II/BPL/LPL"/>
</dbReference>
<dbReference type="InterPro" id="IPR002313">
    <property type="entry name" value="Lys-tRNA-ligase_II"/>
</dbReference>
<dbReference type="InterPro" id="IPR044136">
    <property type="entry name" value="Lys-tRNA-ligase_II_N"/>
</dbReference>
<dbReference type="InterPro" id="IPR018149">
    <property type="entry name" value="Lys-tRNA-synth_II_C"/>
</dbReference>
<dbReference type="InterPro" id="IPR012340">
    <property type="entry name" value="NA-bd_OB-fold"/>
</dbReference>
<dbReference type="InterPro" id="IPR004365">
    <property type="entry name" value="NA-bd_OB_tRNA"/>
</dbReference>
<dbReference type="NCBIfam" id="TIGR00499">
    <property type="entry name" value="lysS_bact"/>
    <property type="match status" value="1"/>
</dbReference>
<dbReference type="NCBIfam" id="NF001756">
    <property type="entry name" value="PRK00484.1"/>
    <property type="match status" value="1"/>
</dbReference>
<dbReference type="PANTHER" id="PTHR42918:SF15">
    <property type="entry name" value="LYSINE--TRNA LIGASE, CHLOROPLASTIC_MITOCHONDRIAL"/>
    <property type="match status" value="1"/>
</dbReference>
<dbReference type="PANTHER" id="PTHR42918">
    <property type="entry name" value="LYSYL-TRNA SYNTHETASE"/>
    <property type="match status" value="1"/>
</dbReference>
<dbReference type="Pfam" id="PF00152">
    <property type="entry name" value="tRNA-synt_2"/>
    <property type="match status" value="1"/>
</dbReference>
<dbReference type="Pfam" id="PF01336">
    <property type="entry name" value="tRNA_anti-codon"/>
    <property type="match status" value="1"/>
</dbReference>
<dbReference type="PRINTS" id="PR00982">
    <property type="entry name" value="TRNASYNTHLYS"/>
</dbReference>
<dbReference type="SUPFAM" id="SSF55681">
    <property type="entry name" value="Class II aaRS and biotin synthetases"/>
    <property type="match status" value="1"/>
</dbReference>
<dbReference type="SUPFAM" id="SSF50249">
    <property type="entry name" value="Nucleic acid-binding proteins"/>
    <property type="match status" value="1"/>
</dbReference>
<dbReference type="PROSITE" id="PS50862">
    <property type="entry name" value="AA_TRNA_LIGASE_II"/>
    <property type="match status" value="1"/>
</dbReference>
<name>SYK_PSEAB</name>